<sequence>MSSNDSIMLTPLKEQDPTVAEIMRHEADRQRSSVVLIASENFTSRAVMDALGSVMSNKYSEGYPGARYYGGNKFIDQIETLCQERALAAFNLDPAKWGVNVQCLSGSPANMQVYQAIMPPHGRLMGLDLPSGGHLSHGYQTDTKKISAVSTYFESMPYRVDPNTGLIDYDMLEHDAQLFRPKILVAGTSAYCRLIDYARMRQIADSVNAYLVVDMAHISGLVSAGVIPSPFEYADVVTTTTHKSLRGPRGAMIFFRRGLRKHDKKGNPIYYDLEDKINFSVFPGHQGGPHNHTITALAVALKQCQEPAYKEYQAQVVKNAKVCEEEFKKRGYKLAADGTDSHMVLVDVKSKGVDGARAERVLELINIVTNKNTVPSDKSAFSPSGIRVGTPAMTTRGFKEQDFVRVVDYIDRALTFAANLQKELPKDANKLKDFKAKLGEGEQYPELVQLQKEVAEWASSFPLADKW</sequence>
<dbReference type="EC" id="2.1.2.1"/>
<dbReference type="EMBL" id="CU329670">
    <property type="protein sequence ID" value="CAB11269.1"/>
    <property type="molecule type" value="Genomic_DNA"/>
</dbReference>
<dbReference type="PIR" id="T38353">
    <property type="entry name" value="T38353"/>
</dbReference>
<dbReference type="SMR" id="O13972"/>
<dbReference type="BioGRID" id="279105">
    <property type="interactions" value="33"/>
</dbReference>
<dbReference type="FunCoup" id="O13972">
    <property type="interactions" value="767"/>
</dbReference>
<dbReference type="STRING" id="284812.O13972"/>
<dbReference type="iPTMnet" id="O13972"/>
<dbReference type="PaxDb" id="4896-SPAC24C9.12c.1"/>
<dbReference type="EnsemblFungi" id="SPAC24C9.12c.1">
    <property type="protein sequence ID" value="SPAC24C9.12c.1:pep"/>
    <property type="gene ID" value="SPAC24C9.12c"/>
</dbReference>
<dbReference type="KEGG" id="spo:2542651"/>
<dbReference type="PomBase" id="SPAC24C9.12c"/>
<dbReference type="VEuPathDB" id="FungiDB:SPAC24C9.12c"/>
<dbReference type="eggNOG" id="KOG2467">
    <property type="taxonomic scope" value="Eukaryota"/>
</dbReference>
<dbReference type="HOGENOM" id="CLU_022477_0_1_1"/>
<dbReference type="InParanoid" id="O13972"/>
<dbReference type="OMA" id="CQFANVQ"/>
<dbReference type="PhylomeDB" id="O13972"/>
<dbReference type="UniPathway" id="UPA00193"/>
<dbReference type="PRO" id="PR:O13972"/>
<dbReference type="Proteomes" id="UP000002485">
    <property type="component" value="Chromosome I"/>
</dbReference>
<dbReference type="GO" id="GO:0005737">
    <property type="term" value="C:cytoplasm"/>
    <property type="evidence" value="ECO:0000318"/>
    <property type="project" value="GO_Central"/>
</dbReference>
<dbReference type="GO" id="GO:0005739">
    <property type="term" value="C:mitochondrion"/>
    <property type="evidence" value="ECO:0000318"/>
    <property type="project" value="GO_Central"/>
</dbReference>
<dbReference type="GO" id="GO:0004372">
    <property type="term" value="F:glycine hydroxymethyltransferase activity"/>
    <property type="evidence" value="ECO:0000318"/>
    <property type="project" value="GO_Central"/>
</dbReference>
<dbReference type="GO" id="GO:0030170">
    <property type="term" value="F:pyridoxal phosphate binding"/>
    <property type="evidence" value="ECO:0000318"/>
    <property type="project" value="GO_Central"/>
</dbReference>
<dbReference type="GO" id="GO:0019264">
    <property type="term" value="P:glycine biosynthetic process from serine"/>
    <property type="evidence" value="ECO:0000318"/>
    <property type="project" value="GO_Central"/>
</dbReference>
<dbReference type="GO" id="GO:0035999">
    <property type="term" value="P:tetrahydrofolate interconversion"/>
    <property type="evidence" value="ECO:0007669"/>
    <property type="project" value="UniProtKB-UniPathway"/>
</dbReference>
<dbReference type="GO" id="GO:0046653">
    <property type="term" value="P:tetrahydrofolate metabolic process"/>
    <property type="evidence" value="ECO:0000318"/>
    <property type="project" value="GO_Central"/>
</dbReference>
<dbReference type="CDD" id="cd00378">
    <property type="entry name" value="SHMT"/>
    <property type="match status" value="1"/>
</dbReference>
<dbReference type="FunFam" id="3.40.640.10:FF:000097">
    <property type="entry name" value="Serine hydroxymethyltransferase"/>
    <property type="match status" value="1"/>
</dbReference>
<dbReference type="Gene3D" id="3.90.1150.10">
    <property type="entry name" value="Aspartate Aminotransferase, domain 1"/>
    <property type="match status" value="1"/>
</dbReference>
<dbReference type="Gene3D" id="3.40.640.10">
    <property type="entry name" value="Type I PLP-dependent aspartate aminotransferase-like (Major domain)"/>
    <property type="match status" value="1"/>
</dbReference>
<dbReference type="HAMAP" id="MF_00051">
    <property type="entry name" value="SHMT"/>
    <property type="match status" value="1"/>
</dbReference>
<dbReference type="InterPro" id="IPR015424">
    <property type="entry name" value="PyrdxlP-dep_Trfase"/>
</dbReference>
<dbReference type="InterPro" id="IPR015421">
    <property type="entry name" value="PyrdxlP-dep_Trfase_major"/>
</dbReference>
<dbReference type="InterPro" id="IPR015422">
    <property type="entry name" value="PyrdxlP-dep_Trfase_small"/>
</dbReference>
<dbReference type="InterPro" id="IPR001085">
    <property type="entry name" value="Ser_HO-MeTrfase"/>
</dbReference>
<dbReference type="InterPro" id="IPR049943">
    <property type="entry name" value="Ser_HO-MeTrfase-like"/>
</dbReference>
<dbReference type="InterPro" id="IPR019798">
    <property type="entry name" value="Ser_HO-MeTrfase_PLP_BS"/>
</dbReference>
<dbReference type="InterPro" id="IPR039429">
    <property type="entry name" value="SHMT-like_dom"/>
</dbReference>
<dbReference type="NCBIfam" id="NF000586">
    <property type="entry name" value="PRK00011.1"/>
    <property type="match status" value="1"/>
</dbReference>
<dbReference type="PANTHER" id="PTHR11680">
    <property type="entry name" value="SERINE HYDROXYMETHYLTRANSFERASE"/>
    <property type="match status" value="1"/>
</dbReference>
<dbReference type="PANTHER" id="PTHR11680:SF58">
    <property type="entry name" value="SERINE HYDROXYMETHYLTRANSFERASE, CYTOSOLIC-RELATED"/>
    <property type="match status" value="1"/>
</dbReference>
<dbReference type="Pfam" id="PF00464">
    <property type="entry name" value="SHMT"/>
    <property type="match status" value="1"/>
</dbReference>
<dbReference type="PIRSF" id="PIRSF000412">
    <property type="entry name" value="SHMT"/>
    <property type="match status" value="1"/>
</dbReference>
<dbReference type="SUPFAM" id="SSF53383">
    <property type="entry name" value="PLP-dependent transferases"/>
    <property type="match status" value="1"/>
</dbReference>
<dbReference type="PROSITE" id="PS00096">
    <property type="entry name" value="SHMT"/>
    <property type="match status" value="1"/>
</dbReference>
<feature type="chain" id="PRO_0000113515" description="Probable serine hydroxymethyltransferase, cytosolic">
    <location>
        <begin position="1"/>
        <end position="467"/>
    </location>
</feature>
<feature type="modified residue" description="N6-(pyridoxal phosphate)lysine" evidence="1">
    <location>
        <position position="243"/>
    </location>
</feature>
<accession>O13972</accession>
<organism>
    <name type="scientific">Schizosaccharomyces pombe (strain 972 / ATCC 24843)</name>
    <name type="common">Fission yeast</name>
    <dbReference type="NCBI Taxonomy" id="284812"/>
    <lineage>
        <taxon>Eukaryota</taxon>
        <taxon>Fungi</taxon>
        <taxon>Dikarya</taxon>
        <taxon>Ascomycota</taxon>
        <taxon>Taphrinomycotina</taxon>
        <taxon>Schizosaccharomycetes</taxon>
        <taxon>Schizosaccharomycetales</taxon>
        <taxon>Schizosaccharomycetaceae</taxon>
        <taxon>Schizosaccharomyces</taxon>
    </lineage>
</organism>
<name>GLYD_SCHPO</name>
<keyword id="KW-0963">Cytoplasm</keyword>
<keyword id="KW-0554">One-carbon metabolism</keyword>
<keyword id="KW-0663">Pyridoxal phosphate</keyword>
<keyword id="KW-1185">Reference proteome</keyword>
<keyword id="KW-0808">Transferase</keyword>
<gene>
    <name type="ORF">SPAC24C9.12c</name>
</gene>
<reference key="1">
    <citation type="journal article" date="2002" name="Nature">
        <title>The genome sequence of Schizosaccharomyces pombe.</title>
        <authorList>
            <person name="Wood V."/>
            <person name="Gwilliam R."/>
            <person name="Rajandream M.A."/>
            <person name="Lyne M.H."/>
            <person name="Lyne R."/>
            <person name="Stewart A."/>
            <person name="Sgouros J.G."/>
            <person name="Peat N."/>
            <person name="Hayles J."/>
            <person name="Baker S.G."/>
            <person name="Basham D."/>
            <person name="Bowman S."/>
            <person name="Brooks K."/>
            <person name="Brown D."/>
            <person name="Brown S."/>
            <person name="Chillingworth T."/>
            <person name="Churcher C.M."/>
            <person name="Collins M."/>
            <person name="Connor R."/>
            <person name="Cronin A."/>
            <person name="Davis P."/>
            <person name="Feltwell T."/>
            <person name="Fraser A."/>
            <person name="Gentles S."/>
            <person name="Goble A."/>
            <person name="Hamlin N."/>
            <person name="Harris D.E."/>
            <person name="Hidalgo J."/>
            <person name="Hodgson G."/>
            <person name="Holroyd S."/>
            <person name="Hornsby T."/>
            <person name="Howarth S."/>
            <person name="Huckle E.J."/>
            <person name="Hunt S."/>
            <person name="Jagels K."/>
            <person name="James K.D."/>
            <person name="Jones L."/>
            <person name="Jones M."/>
            <person name="Leather S."/>
            <person name="McDonald S."/>
            <person name="McLean J."/>
            <person name="Mooney P."/>
            <person name="Moule S."/>
            <person name="Mungall K.L."/>
            <person name="Murphy L.D."/>
            <person name="Niblett D."/>
            <person name="Odell C."/>
            <person name="Oliver K."/>
            <person name="O'Neil S."/>
            <person name="Pearson D."/>
            <person name="Quail M.A."/>
            <person name="Rabbinowitsch E."/>
            <person name="Rutherford K.M."/>
            <person name="Rutter S."/>
            <person name="Saunders D."/>
            <person name="Seeger K."/>
            <person name="Sharp S."/>
            <person name="Skelton J."/>
            <person name="Simmonds M.N."/>
            <person name="Squares R."/>
            <person name="Squares S."/>
            <person name="Stevens K."/>
            <person name="Taylor K."/>
            <person name="Taylor R.G."/>
            <person name="Tivey A."/>
            <person name="Walsh S.V."/>
            <person name="Warren T."/>
            <person name="Whitehead S."/>
            <person name="Woodward J.R."/>
            <person name="Volckaert G."/>
            <person name="Aert R."/>
            <person name="Robben J."/>
            <person name="Grymonprez B."/>
            <person name="Weltjens I."/>
            <person name="Vanstreels E."/>
            <person name="Rieger M."/>
            <person name="Schaefer M."/>
            <person name="Mueller-Auer S."/>
            <person name="Gabel C."/>
            <person name="Fuchs M."/>
            <person name="Duesterhoeft A."/>
            <person name="Fritzc C."/>
            <person name="Holzer E."/>
            <person name="Moestl D."/>
            <person name="Hilbert H."/>
            <person name="Borzym K."/>
            <person name="Langer I."/>
            <person name="Beck A."/>
            <person name="Lehrach H."/>
            <person name="Reinhardt R."/>
            <person name="Pohl T.M."/>
            <person name="Eger P."/>
            <person name="Zimmermann W."/>
            <person name="Wedler H."/>
            <person name="Wambutt R."/>
            <person name="Purnelle B."/>
            <person name="Goffeau A."/>
            <person name="Cadieu E."/>
            <person name="Dreano S."/>
            <person name="Gloux S."/>
            <person name="Lelaure V."/>
            <person name="Mottier S."/>
            <person name="Galibert F."/>
            <person name="Aves S.J."/>
            <person name="Xiang Z."/>
            <person name="Hunt C."/>
            <person name="Moore K."/>
            <person name="Hurst S.M."/>
            <person name="Lucas M."/>
            <person name="Rochet M."/>
            <person name="Gaillardin C."/>
            <person name="Tallada V.A."/>
            <person name="Garzon A."/>
            <person name="Thode G."/>
            <person name="Daga R.R."/>
            <person name="Cruzado L."/>
            <person name="Jimenez J."/>
            <person name="Sanchez M."/>
            <person name="del Rey F."/>
            <person name="Benito J."/>
            <person name="Dominguez A."/>
            <person name="Revuelta J.L."/>
            <person name="Moreno S."/>
            <person name="Armstrong J."/>
            <person name="Forsburg S.L."/>
            <person name="Cerutti L."/>
            <person name="Lowe T."/>
            <person name="McCombie W.R."/>
            <person name="Paulsen I."/>
            <person name="Potashkin J."/>
            <person name="Shpakovski G.V."/>
            <person name="Ussery D."/>
            <person name="Barrell B.G."/>
            <person name="Nurse P."/>
        </authorList>
    </citation>
    <scope>NUCLEOTIDE SEQUENCE [LARGE SCALE GENOMIC DNA]</scope>
    <source>
        <strain>972 / ATCC 24843</strain>
    </source>
</reference>
<evidence type="ECO:0000250" key="1"/>
<evidence type="ECO:0000305" key="2"/>
<comment type="function">
    <text>Interconversion of serine and glycine.</text>
</comment>
<comment type="catalytic activity">
    <reaction>
        <text>(6R)-5,10-methylene-5,6,7,8-tetrahydrofolate + glycine + H2O = (6S)-5,6,7,8-tetrahydrofolate + L-serine</text>
        <dbReference type="Rhea" id="RHEA:15481"/>
        <dbReference type="ChEBI" id="CHEBI:15377"/>
        <dbReference type="ChEBI" id="CHEBI:15636"/>
        <dbReference type="ChEBI" id="CHEBI:33384"/>
        <dbReference type="ChEBI" id="CHEBI:57305"/>
        <dbReference type="ChEBI" id="CHEBI:57453"/>
        <dbReference type="EC" id="2.1.2.1"/>
    </reaction>
</comment>
<comment type="cofactor">
    <cofactor evidence="1">
        <name>pyridoxal 5'-phosphate</name>
        <dbReference type="ChEBI" id="CHEBI:597326"/>
    </cofactor>
</comment>
<comment type="pathway">
    <text>One-carbon metabolism; tetrahydrofolate interconversion.</text>
</comment>
<comment type="subunit">
    <text evidence="1">Homotetramer.</text>
</comment>
<comment type="subcellular location">
    <subcellularLocation>
        <location evidence="2">Cytoplasm</location>
    </subcellularLocation>
</comment>
<comment type="similarity">
    <text evidence="2">Belongs to the SHMT family.</text>
</comment>
<protein>
    <recommendedName>
        <fullName>Probable serine hydroxymethyltransferase, cytosolic</fullName>
        <shortName>SHMT</shortName>
        <ecNumber>2.1.2.1</ecNumber>
    </recommendedName>
    <alternativeName>
        <fullName>Glycine hydroxymethyltransferase</fullName>
    </alternativeName>
    <alternativeName>
        <fullName>Serine methylase</fullName>
    </alternativeName>
</protein>
<proteinExistence type="inferred from homology"/>